<sequence length="620" mass="67700">MSFDIAKYPTLALVDSTQELRLLPKESLPKLSDELRRYLLDSVSRSSGHFASGLGTVELTVALHYVYNTPFDQLIWDVGHQAYPHKILTGRRDKIGTIRQKGGLHPFPWRGESEFDVLSVGHSSTSISAGIGIAVAAEKENKQRRTVCVIGDGAITAGMAFEAMNHAGDIKPDMLVILNDNEMSISENVGALNNHLAQLLSGKLYSTLREGGKKVFSGVPPIKELLKRTEEHIKGMVVPGTLFEELGFNYIGPVDGHDVLGLVTTLKNMRDLKGPQFLHIMTKKGRGYEPAEKDPITFHAVPKFDPTSGCLPKSSGGMPSYSKIFGDWLCETAAKDNKLMAVTPAMREGSGMVEFSKKYPDQYFDVAIAEQHAVTFAAGLAIGGYKPIVAIYSTFLQRAYDQVIHDVAIQKLPVLFAIDRAGIVGADGQTHQGAFDLSFLRCVPDMVVMTPSDENECRQMLFTGYHYQDGPSAVRYPRGNAVGVELEPLTKMPIGKGIVKRHGEKLAILNFGTLMPEAAKVAESMNATLVDMRFVKPLDETLILEMASRHEVLITLEENAIMGGAGSGVNEVLMANRKPIPVLNLGLPDRFIPQGTQDEARAEIGLDAAGIEAKIRTWLA</sequence>
<proteinExistence type="inferred from homology"/>
<feature type="chain" id="PRO_1000059447" description="1-deoxy-D-xylulose-5-phosphate synthase">
    <location>
        <begin position="1"/>
        <end position="620"/>
    </location>
</feature>
<feature type="binding site" evidence="1">
    <location>
        <position position="80"/>
    </location>
    <ligand>
        <name>thiamine diphosphate</name>
        <dbReference type="ChEBI" id="CHEBI:58937"/>
    </ligand>
</feature>
<feature type="binding site" evidence="1">
    <location>
        <begin position="121"/>
        <end position="123"/>
    </location>
    <ligand>
        <name>thiamine diphosphate</name>
        <dbReference type="ChEBI" id="CHEBI:58937"/>
    </ligand>
</feature>
<feature type="binding site" evidence="1">
    <location>
        <position position="152"/>
    </location>
    <ligand>
        <name>Mg(2+)</name>
        <dbReference type="ChEBI" id="CHEBI:18420"/>
    </ligand>
</feature>
<feature type="binding site" evidence="1">
    <location>
        <begin position="153"/>
        <end position="154"/>
    </location>
    <ligand>
        <name>thiamine diphosphate</name>
        <dbReference type="ChEBI" id="CHEBI:58937"/>
    </ligand>
</feature>
<feature type="binding site" evidence="1">
    <location>
        <position position="181"/>
    </location>
    <ligand>
        <name>Mg(2+)</name>
        <dbReference type="ChEBI" id="CHEBI:18420"/>
    </ligand>
</feature>
<feature type="binding site" evidence="1">
    <location>
        <position position="181"/>
    </location>
    <ligand>
        <name>thiamine diphosphate</name>
        <dbReference type="ChEBI" id="CHEBI:58937"/>
    </ligand>
</feature>
<feature type="binding site" evidence="1">
    <location>
        <position position="288"/>
    </location>
    <ligand>
        <name>thiamine diphosphate</name>
        <dbReference type="ChEBI" id="CHEBI:58937"/>
    </ligand>
</feature>
<feature type="binding site" evidence="1">
    <location>
        <position position="370"/>
    </location>
    <ligand>
        <name>thiamine diphosphate</name>
        <dbReference type="ChEBI" id="CHEBI:58937"/>
    </ligand>
</feature>
<reference key="1">
    <citation type="journal article" date="2010" name="PLoS Genet.">
        <title>Genome sequence of the plant growth promoting endophytic bacterium Enterobacter sp. 638.</title>
        <authorList>
            <person name="Taghavi S."/>
            <person name="van der Lelie D."/>
            <person name="Hoffman A."/>
            <person name="Zhang Y.B."/>
            <person name="Walla M.D."/>
            <person name="Vangronsveld J."/>
            <person name="Newman L."/>
            <person name="Monchy S."/>
        </authorList>
    </citation>
    <scope>NUCLEOTIDE SEQUENCE [LARGE SCALE GENOMIC DNA]</scope>
    <source>
        <strain>638</strain>
    </source>
</reference>
<name>DXS_ENT38</name>
<evidence type="ECO:0000255" key="1">
    <source>
        <dbReference type="HAMAP-Rule" id="MF_00315"/>
    </source>
</evidence>
<keyword id="KW-0414">Isoprene biosynthesis</keyword>
<keyword id="KW-0460">Magnesium</keyword>
<keyword id="KW-0479">Metal-binding</keyword>
<keyword id="KW-0784">Thiamine biosynthesis</keyword>
<keyword id="KW-0786">Thiamine pyrophosphate</keyword>
<keyword id="KW-0808">Transferase</keyword>
<gene>
    <name evidence="1" type="primary">dxs</name>
    <name type="ordered locus">Ent638_0887</name>
</gene>
<dbReference type="EC" id="2.2.1.7" evidence="1"/>
<dbReference type="EMBL" id="CP000653">
    <property type="protein sequence ID" value="ABP59571.1"/>
    <property type="molecule type" value="Genomic_DNA"/>
</dbReference>
<dbReference type="RefSeq" id="WP_012016292.1">
    <property type="nucleotide sequence ID" value="NC_009436.1"/>
</dbReference>
<dbReference type="SMR" id="A4W791"/>
<dbReference type="STRING" id="399742.Ent638_0887"/>
<dbReference type="KEGG" id="ent:Ent638_0887"/>
<dbReference type="eggNOG" id="COG1154">
    <property type="taxonomic scope" value="Bacteria"/>
</dbReference>
<dbReference type="HOGENOM" id="CLU_009227_1_4_6"/>
<dbReference type="OrthoDB" id="9803371at2"/>
<dbReference type="UniPathway" id="UPA00064">
    <property type="reaction ID" value="UER00091"/>
</dbReference>
<dbReference type="Proteomes" id="UP000000230">
    <property type="component" value="Chromosome"/>
</dbReference>
<dbReference type="GO" id="GO:0005829">
    <property type="term" value="C:cytosol"/>
    <property type="evidence" value="ECO:0007669"/>
    <property type="project" value="TreeGrafter"/>
</dbReference>
<dbReference type="GO" id="GO:0008661">
    <property type="term" value="F:1-deoxy-D-xylulose-5-phosphate synthase activity"/>
    <property type="evidence" value="ECO:0007669"/>
    <property type="project" value="UniProtKB-UniRule"/>
</dbReference>
<dbReference type="GO" id="GO:0000287">
    <property type="term" value="F:magnesium ion binding"/>
    <property type="evidence" value="ECO:0007669"/>
    <property type="project" value="UniProtKB-UniRule"/>
</dbReference>
<dbReference type="GO" id="GO:0030976">
    <property type="term" value="F:thiamine pyrophosphate binding"/>
    <property type="evidence" value="ECO:0007669"/>
    <property type="project" value="UniProtKB-UniRule"/>
</dbReference>
<dbReference type="GO" id="GO:0052865">
    <property type="term" value="P:1-deoxy-D-xylulose 5-phosphate biosynthetic process"/>
    <property type="evidence" value="ECO:0007669"/>
    <property type="project" value="UniProtKB-UniPathway"/>
</dbReference>
<dbReference type="GO" id="GO:0019288">
    <property type="term" value="P:isopentenyl diphosphate biosynthetic process, methylerythritol 4-phosphate pathway"/>
    <property type="evidence" value="ECO:0007669"/>
    <property type="project" value="TreeGrafter"/>
</dbReference>
<dbReference type="GO" id="GO:0016114">
    <property type="term" value="P:terpenoid biosynthetic process"/>
    <property type="evidence" value="ECO:0007669"/>
    <property type="project" value="UniProtKB-UniRule"/>
</dbReference>
<dbReference type="GO" id="GO:0009228">
    <property type="term" value="P:thiamine biosynthetic process"/>
    <property type="evidence" value="ECO:0007669"/>
    <property type="project" value="UniProtKB-UniRule"/>
</dbReference>
<dbReference type="CDD" id="cd02007">
    <property type="entry name" value="TPP_DXS"/>
    <property type="match status" value="1"/>
</dbReference>
<dbReference type="CDD" id="cd07033">
    <property type="entry name" value="TPP_PYR_DXS_TK_like"/>
    <property type="match status" value="1"/>
</dbReference>
<dbReference type="FunFam" id="3.40.50.920:FF:000002">
    <property type="entry name" value="1-deoxy-D-xylulose-5-phosphate synthase"/>
    <property type="match status" value="1"/>
</dbReference>
<dbReference type="FunFam" id="3.40.50.970:FF:000005">
    <property type="entry name" value="1-deoxy-D-xylulose-5-phosphate synthase"/>
    <property type="match status" value="1"/>
</dbReference>
<dbReference type="Gene3D" id="3.40.50.920">
    <property type="match status" value="1"/>
</dbReference>
<dbReference type="Gene3D" id="3.40.50.970">
    <property type="match status" value="2"/>
</dbReference>
<dbReference type="HAMAP" id="MF_00315">
    <property type="entry name" value="DXP_synth"/>
    <property type="match status" value="1"/>
</dbReference>
<dbReference type="InterPro" id="IPR005477">
    <property type="entry name" value="Dxylulose-5-P_synthase"/>
</dbReference>
<dbReference type="InterPro" id="IPR029061">
    <property type="entry name" value="THDP-binding"/>
</dbReference>
<dbReference type="InterPro" id="IPR009014">
    <property type="entry name" value="Transketo_C/PFOR_II"/>
</dbReference>
<dbReference type="InterPro" id="IPR005475">
    <property type="entry name" value="Transketolase-like_Pyr-bd"/>
</dbReference>
<dbReference type="InterPro" id="IPR020826">
    <property type="entry name" value="Transketolase_BS"/>
</dbReference>
<dbReference type="InterPro" id="IPR033248">
    <property type="entry name" value="Transketolase_C"/>
</dbReference>
<dbReference type="InterPro" id="IPR049557">
    <property type="entry name" value="Transketolase_CS"/>
</dbReference>
<dbReference type="NCBIfam" id="TIGR00204">
    <property type="entry name" value="dxs"/>
    <property type="match status" value="1"/>
</dbReference>
<dbReference type="NCBIfam" id="NF003933">
    <property type="entry name" value="PRK05444.2-2"/>
    <property type="match status" value="1"/>
</dbReference>
<dbReference type="PANTHER" id="PTHR43322">
    <property type="entry name" value="1-D-DEOXYXYLULOSE 5-PHOSPHATE SYNTHASE-RELATED"/>
    <property type="match status" value="1"/>
</dbReference>
<dbReference type="PANTHER" id="PTHR43322:SF5">
    <property type="entry name" value="1-DEOXY-D-XYLULOSE-5-PHOSPHATE SYNTHASE, CHLOROPLASTIC"/>
    <property type="match status" value="1"/>
</dbReference>
<dbReference type="Pfam" id="PF13292">
    <property type="entry name" value="DXP_synthase_N"/>
    <property type="match status" value="1"/>
</dbReference>
<dbReference type="Pfam" id="PF02779">
    <property type="entry name" value="Transket_pyr"/>
    <property type="match status" value="1"/>
</dbReference>
<dbReference type="Pfam" id="PF02780">
    <property type="entry name" value="Transketolase_C"/>
    <property type="match status" value="1"/>
</dbReference>
<dbReference type="SMART" id="SM00861">
    <property type="entry name" value="Transket_pyr"/>
    <property type="match status" value="1"/>
</dbReference>
<dbReference type="SUPFAM" id="SSF52518">
    <property type="entry name" value="Thiamin diphosphate-binding fold (THDP-binding)"/>
    <property type="match status" value="2"/>
</dbReference>
<dbReference type="SUPFAM" id="SSF52922">
    <property type="entry name" value="TK C-terminal domain-like"/>
    <property type="match status" value="1"/>
</dbReference>
<dbReference type="PROSITE" id="PS00801">
    <property type="entry name" value="TRANSKETOLASE_1"/>
    <property type="match status" value="1"/>
</dbReference>
<dbReference type="PROSITE" id="PS00802">
    <property type="entry name" value="TRANSKETOLASE_2"/>
    <property type="match status" value="1"/>
</dbReference>
<comment type="function">
    <text evidence="1">Catalyzes the acyloin condensation reaction between C atoms 2 and 3 of pyruvate and glyceraldehyde 3-phosphate to yield 1-deoxy-D-xylulose-5-phosphate (DXP).</text>
</comment>
<comment type="catalytic activity">
    <reaction evidence="1">
        <text>D-glyceraldehyde 3-phosphate + pyruvate + H(+) = 1-deoxy-D-xylulose 5-phosphate + CO2</text>
        <dbReference type="Rhea" id="RHEA:12605"/>
        <dbReference type="ChEBI" id="CHEBI:15361"/>
        <dbReference type="ChEBI" id="CHEBI:15378"/>
        <dbReference type="ChEBI" id="CHEBI:16526"/>
        <dbReference type="ChEBI" id="CHEBI:57792"/>
        <dbReference type="ChEBI" id="CHEBI:59776"/>
        <dbReference type="EC" id="2.2.1.7"/>
    </reaction>
</comment>
<comment type="cofactor">
    <cofactor evidence="1">
        <name>Mg(2+)</name>
        <dbReference type="ChEBI" id="CHEBI:18420"/>
    </cofactor>
    <text evidence="1">Binds 1 Mg(2+) ion per subunit.</text>
</comment>
<comment type="cofactor">
    <cofactor evidence="1">
        <name>thiamine diphosphate</name>
        <dbReference type="ChEBI" id="CHEBI:58937"/>
    </cofactor>
    <text evidence="1">Binds 1 thiamine pyrophosphate per subunit.</text>
</comment>
<comment type="pathway">
    <text evidence="1">Metabolic intermediate biosynthesis; 1-deoxy-D-xylulose 5-phosphate biosynthesis; 1-deoxy-D-xylulose 5-phosphate from D-glyceraldehyde 3-phosphate and pyruvate: step 1/1.</text>
</comment>
<comment type="subunit">
    <text evidence="1">Homodimer.</text>
</comment>
<comment type="similarity">
    <text evidence="1">Belongs to the transketolase family. DXPS subfamily.</text>
</comment>
<organism>
    <name type="scientific">Enterobacter sp. (strain 638)</name>
    <dbReference type="NCBI Taxonomy" id="399742"/>
    <lineage>
        <taxon>Bacteria</taxon>
        <taxon>Pseudomonadati</taxon>
        <taxon>Pseudomonadota</taxon>
        <taxon>Gammaproteobacteria</taxon>
        <taxon>Enterobacterales</taxon>
        <taxon>Enterobacteriaceae</taxon>
        <taxon>Enterobacter</taxon>
    </lineage>
</organism>
<accession>A4W791</accession>
<protein>
    <recommendedName>
        <fullName evidence="1">1-deoxy-D-xylulose-5-phosphate synthase</fullName>
        <ecNumber evidence="1">2.2.1.7</ecNumber>
    </recommendedName>
    <alternativeName>
        <fullName evidence="1">1-deoxyxylulose-5-phosphate synthase</fullName>
        <shortName evidence="1">DXP synthase</shortName>
        <shortName evidence="1">DXPS</shortName>
    </alternativeName>
</protein>